<accession>Q8RCT3</accession>
<dbReference type="EC" id="4.2.1.70" evidence="1"/>
<dbReference type="EMBL" id="AE008691">
    <property type="protein sequence ID" value="AAM23619.1"/>
    <property type="molecule type" value="Genomic_DNA"/>
</dbReference>
<dbReference type="RefSeq" id="WP_011024783.1">
    <property type="nucleotide sequence ID" value="NC_003869.1"/>
</dbReference>
<dbReference type="SMR" id="Q8RCT3"/>
<dbReference type="STRING" id="273068.TTE0327"/>
<dbReference type="KEGG" id="tte:TTE0327"/>
<dbReference type="eggNOG" id="COG2313">
    <property type="taxonomic scope" value="Bacteria"/>
</dbReference>
<dbReference type="HOGENOM" id="CLU_012201_0_1_9"/>
<dbReference type="OrthoDB" id="9805870at2"/>
<dbReference type="Proteomes" id="UP000000555">
    <property type="component" value="Chromosome"/>
</dbReference>
<dbReference type="GO" id="GO:0005737">
    <property type="term" value="C:cytoplasm"/>
    <property type="evidence" value="ECO:0007669"/>
    <property type="project" value="TreeGrafter"/>
</dbReference>
<dbReference type="GO" id="GO:0016798">
    <property type="term" value="F:hydrolase activity, acting on glycosyl bonds"/>
    <property type="evidence" value="ECO:0007669"/>
    <property type="project" value="UniProtKB-KW"/>
</dbReference>
<dbReference type="GO" id="GO:0046872">
    <property type="term" value="F:metal ion binding"/>
    <property type="evidence" value="ECO:0007669"/>
    <property type="project" value="UniProtKB-KW"/>
</dbReference>
<dbReference type="GO" id="GO:0004730">
    <property type="term" value="F:pseudouridylate synthase activity"/>
    <property type="evidence" value="ECO:0007669"/>
    <property type="project" value="UniProtKB-UniRule"/>
</dbReference>
<dbReference type="GO" id="GO:0046113">
    <property type="term" value="P:nucleobase catabolic process"/>
    <property type="evidence" value="ECO:0007669"/>
    <property type="project" value="UniProtKB-UniRule"/>
</dbReference>
<dbReference type="Gene3D" id="3.40.1790.10">
    <property type="entry name" value="Indigoidine synthase domain"/>
    <property type="match status" value="1"/>
</dbReference>
<dbReference type="HAMAP" id="MF_01876">
    <property type="entry name" value="PsiMP_glycosidase"/>
    <property type="match status" value="1"/>
</dbReference>
<dbReference type="InterPro" id="IPR022830">
    <property type="entry name" value="Indigdn_synthA-like"/>
</dbReference>
<dbReference type="InterPro" id="IPR007342">
    <property type="entry name" value="PsuG"/>
</dbReference>
<dbReference type="PANTHER" id="PTHR42909:SF1">
    <property type="entry name" value="CARBOHYDRATE KINASE PFKB DOMAIN-CONTAINING PROTEIN"/>
    <property type="match status" value="1"/>
</dbReference>
<dbReference type="PANTHER" id="PTHR42909">
    <property type="entry name" value="ZGC:136858"/>
    <property type="match status" value="1"/>
</dbReference>
<dbReference type="Pfam" id="PF04227">
    <property type="entry name" value="Indigoidine_A"/>
    <property type="match status" value="1"/>
</dbReference>
<dbReference type="SUPFAM" id="SSF110581">
    <property type="entry name" value="Indigoidine synthase A-like"/>
    <property type="match status" value="1"/>
</dbReference>
<evidence type="ECO:0000255" key="1">
    <source>
        <dbReference type="HAMAP-Rule" id="MF_01876"/>
    </source>
</evidence>
<protein>
    <recommendedName>
        <fullName evidence="1">Pseudouridine-5'-phosphate glycosidase</fullName>
        <shortName evidence="1">PsiMP glycosidase</shortName>
        <ecNumber evidence="1">4.2.1.70</ecNumber>
    </recommendedName>
</protein>
<feature type="chain" id="PRO_0000390560" description="Pseudouridine-5'-phosphate glycosidase">
    <location>
        <begin position="1"/>
        <end position="307"/>
    </location>
</feature>
<feature type="active site" description="Proton donor" evidence="1">
    <location>
        <position position="25"/>
    </location>
</feature>
<feature type="active site" description="Nucleophile" evidence="1">
    <location>
        <position position="159"/>
    </location>
</feature>
<feature type="binding site" evidence="1">
    <location>
        <position position="86"/>
    </location>
    <ligand>
        <name>substrate</name>
    </ligand>
</feature>
<feature type="binding site" evidence="1">
    <location>
        <position position="106"/>
    </location>
    <ligand>
        <name>substrate</name>
    </ligand>
</feature>
<feature type="binding site" evidence="1">
    <location>
        <position position="138"/>
    </location>
    <ligand>
        <name>Mn(2+)</name>
        <dbReference type="ChEBI" id="CHEBI:29035"/>
    </ligand>
</feature>
<feature type="binding site" evidence="1">
    <location>
        <begin position="140"/>
        <end position="142"/>
    </location>
    <ligand>
        <name>substrate</name>
    </ligand>
</feature>
<sequence length="307" mass="33481">MNRFIDLSEEVKSALEERRPVVALESTIISHGMPYPQNIETARALEEIVRENGAVPATIAIIGGKIKIGLNEEELEFMGTSKEILKASKRDLPVVLAKGLNAATTVSATMICANLAGIKVFVTGGIGGVHRGAEETFDISADLQELANTNVAVVCAGAKAILDLPRTLEYLETFGVPVIGFRTEEFPAFYTRESGLKVDYRVEDEVEAAKVIKTKWDLGLKGGILIANPIPEEYALDRAYIEKAIEEAIFEADRRGIRGKALTPFLLEKIKDLTEGKSLKANIELVKNNARVGAKIAVQLNKLYKEA</sequence>
<name>PSUG_CALS4</name>
<keyword id="KW-0326">Glycosidase</keyword>
<keyword id="KW-0378">Hydrolase</keyword>
<keyword id="KW-0456">Lyase</keyword>
<keyword id="KW-0464">Manganese</keyword>
<keyword id="KW-0479">Metal-binding</keyword>
<keyword id="KW-1185">Reference proteome</keyword>
<organism>
    <name type="scientific">Caldanaerobacter subterraneus subsp. tengcongensis (strain DSM 15242 / JCM 11007 / NBRC 100824 / MB4)</name>
    <name type="common">Thermoanaerobacter tengcongensis</name>
    <dbReference type="NCBI Taxonomy" id="273068"/>
    <lineage>
        <taxon>Bacteria</taxon>
        <taxon>Bacillati</taxon>
        <taxon>Bacillota</taxon>
        <taxon>Clostridia</taxon>
        <taxon>Thermoanaerobacterales</taxon>
        <taxon>Thermoanaerobacteraceae</taxon>
        <taxon>Caldanaerobacter</taxon>
    </lineage>
</organism>
<comment type="function">
    <text evidence="1">Catalyzes the reversible cleavage of pseudouridine 5'-phosphate (PsiMP) to ribose 5-phosphate and uracil. Functions biologically in the cleavage direction, as part of a pseudouridine degradation pathway.</text>
</comment>
<comment type="catalytic activity">
    <reaction evidence="1">
        <text>D-ribose 5-phosphate + uracil = psi-UMP + H2O</text>
        <dbReference type="Rhea" id="RHEA:18337"/>
        <dbReference type="ChEBI" id="CHEBI:15377"/>
        <dbReference type="ChEBI" id="CHEBI:17568"/>
        <dbReference type="ChEBI" id="CHEBI:58380"/>
        <dbReference type="ChEBI" id="CHEBI:78346"/>
        <dbReference type="EC" id="4.2.1.70"/>
    </reaction>
</comment>
<comment type="cofactor">
    <cofactor evidence="1">
        <name>Mn(2+)</name>
        <dbReference type="ChEBI" id="CHEBI:29035"/>
    </cofactor>
    <text evidence="1">Binds 1 Mn(2+) ion per subunit.</text>
</comment>
<comment type="subunit">
    <text evidence="1">Homotrimer.</text>
</comment>
<comment type="similarity">
    <text evidence="1">Belongs to the pseudouridine-5'-phosphate glycosidase family.</text>
</comment>
<proteinExistence type="inferred from homology"/>
<gene>
    <name evidence="1" type="primary">psuG</name>
    <name type="ordered locus">TTE0327</name>
</gene>
<reference key="1">
    <citation type="journal article" date="2002" name="Genome Res.">
        <title>A complete sequence of the T. tengcongensis genome.</title>
        <authorList>
            <person name="Bao Q."/>
            <person name="Tian Y."/>
            <person name="Li W."/>
            <person name="Xu Z."/>
            <person name="Xuan Z."/>
            <person name="Hu S."/>
            <person name="Dong W."/>
            <person name="Yang J."/>
            <person name="Chen Y."/>
            <person name="Xue Y."/>
            <person name="Xu Y."/>
            <person name="Lai X."/>
            <person name="Huang L."/>
            <person name="Dong X."/>
            <person name="Ma Y."/>
            <person name="Ling L."/>
            <person name="Tan H."/>
            <person name="Chen R."/>
            <person name="Wang J."/>
            <person name="Yu J."/>
            <person name="Yang H."/>
        </authorList>
    </citation>
    <scope>NUCLEOTIDE SEQUENCE [LARGE SCALE GENOMIC DNA]</scope>
    <source>
        <strain>DSM 15242 / JCM 11007 / NBRC 100824 / MB4</strain>
    </source>
</reference>